<proteinExistence type="evidence at transcript level"/>
<comment type="similarity">
    <text evidence="1">Belongs to the CIMAP family.</text>
</comment>
<reference key="1">
    <citation type="journal article" date="2005" name="Science">
        <title>The transcriptional landscape of the mammalian genome.</title>
        <authorList>
            <person name="Carninci P."/>
            <person name="Kasukawa T."/>
            <person name="Katayama S."/>
            <person name="Gough J."/>
            <person name="Frith M.C."/>
            <person name="Maeda N."/>
            <person name="Oyama R."/>
            <person name="Ravasi T."/>
            <person name="Lenhard B."/>
            <person name="Wells C."/>
            <person name="Kodzius R."/>
            <person name="Shimokawa K."/>
            <person name="Bajic V.B."/>
            <person name="Brenner S.E."/>
            <person name="Batalov S."/>
            <person name="Forrest A.R."/>
            <person name="Zavolan M."/>
            <person name="Davis M.J."/>
            <person name="Wilming L.G."/>
            <person name="Aidinis V."/>
            <person name="Allen J.E."/>
            <person name="Ambesi-Impiombato A."/>
            <person name="Apweiler R."/>
            <person name="Aturaliya R.N."/>
            <person name="Bailey T.L."/>
            <person name="Bansal M."/>
            <person name="Baxter L."/>
            <person name="Beisel K.W."/>
            <person name="Bersano T."/>
            <person name="Bono H."/>
            <person name="Chalk A.M."/>
            <person name="Chiu K.P."/>
            <person name="Choudhary V."/>
            <person name="Christoffels A."/>
            <person name="Clutterbuck D.R."/>
            <person name="Crowe M.L."/>
            <person name="Dalla E."/>
            <person name="Dalrymple B.P."/>
            <person name="de Bono B."/>
            <person name="Della Gatta G."/>
            <person name="di Bernardo D."/>
            <person name="Down T."/>
            <person name="Engstrom P."/>
            <person name="Fagiolini M."/>
            <person name="Faulkner G."/>
            <person name="Fletcher C.F."/>
            <person name="Fukushima T."/>
            <person name="Furuno M."/>
            <person name="Futaki S."/>
            <person name="Gariboldi M."/>
            <person name="Georgii-Hemming P."/>
            <person name="Gingeras T.R."/>
            <person name="Gojobori T."/>
            <person name="Green R.E."/>
            <person name="Gustincich S."/>
            <person name="Harbers M."/>
            <person name="Hayashi Y."/>
            <person name="Hensch T.K."/>
            <person name="Hirokawa N."/>
            <person name="Hill D."/>
            <person name="Huminiecki L."/>
            <person name="Iacono M."/>
            <person name="Ikeo K."/>
            <person name="Iwama A."/>
            <person name="Ishikawa T."/>
            <person name="Jakt M."/>
            <person name="Kanapin A."/>
            <person name="Katoh M."/>
            <person name="Kawasawa Y."/>
            <person name="Kelso J."/>
            <person name="Kitamura H."/>
            <person name="Kitano H."/>
            <person name="Kollias G."/>
            <person name="Krishnan S.P."/>
            <person name="Kruger A."/>
            <person name="Kummerfeld S.K."/>
            <person name="Kurochkin I.V."/>
            <person name="Lareau L.F."/>
            <person name="Lazarevic D."/>
            <person name="Lipovich L."/>
            <person name="Liu J."/>
            <person name="Liuni S."/>
            <person name="McWilliam S."/>
            <person name="Madan Babu M."/>
            <person name="Madera M."/>
            <person name="Marchionni L."/>
            <person name="Matsuda H."/>
            <person name="Matsuzawa S."/>
            <person name="Miki H."/>
            <person name="Mignone F."/>
            <person name="Miyake S."/>
            <person name="Morris K."/>
            <person name="Mottagui-Tabar S."/>
            <person name="Mulder N."/>
            <person name="Nakano N."/>
            <person name="Nakauchi H."/>
            <person name="Ng P."/>
            <person name="Nilsson R."/>
            <person name="Nishiguchi S."/>
            <person name="Nishikawa S."/>
            <person name="Nori F."/>
            <person name="Ohara O."/>
            <person name="Okazaki Y."/>
            <person name="Orlando V."/>
            <person name="Pang K.C."/>
            <person name="Pavan W.J."/>
            <person name="Pavesi G."/>
            <person name="Pesole G."/>
            <person name="Petrovsky N."/>
            <person name="Piazza S."/>
            <person name="Reed J."/>
            <person name="Reid J.F."/>
            <person name="Ring B.Z."/>
            <person name="Ringwald M."/>
            <person name="Rost B."/>
            <person name="Ruan Y."/>
            <person name="Salzberg S.L."/>
            <person name="Sandelin A."/>
            <person name="Schneider C."/>
            <person name="Schoenbach C."/>
            <person name="Sekiguchi K."/>
            <person name="Semple C.A."/>
            <person name="Seno S."/>
            <person name="Sessa L."/>
            <person name="Sheng Y."/>
            <person name="Shibata Y."/>
            <person name="Shimada H."/>
            <person name="Shimada K."/>
            <person name="Silva D."/>
            <person name="Sinclair B."/>
            <person name="Sperling S."/>
            <person name="Stupka E."/>
            <person name="Sugiura K."/>
            <person name="Sultana R."/>
            <person name="Takenaka Y."/>
            <person name="Taki K."/>
            <person name="Tammoja K."/>
            <person name="Tan S.L."/>
            <person name="Tang S."/>
            <person name="Taylor M.S."/>
            <person name="Tegner J."/>
            <person name="Teichmann S.A."/>
            <person name="Ueda H.R."/>
            <person name="van Nimwegen E."/>
            <person name="Verardo R."/>
            <person name="Wei C.L."/>
            <person name="Yagi K."/>
            <person name="Yamanishi H."/>
            <person name="Zabarovsky E."/>
            <person name="Zhu S."/>
            <person name="Zimmer A."/>
            <person name="Hide W."/>
            <person name="Bult C."/>
            <person name="Grimmond S.M."/>
            <person name="Teasdale R.D."/>
            <person name="Liu E.T."/>
            <person name="Brusic V."/>
            <person name="Quackenbush J."/>
            <person name="Wahlestedt C."/>
            <person name="Mattick J.S."/>
            <person name="Hume D.A."/>
            <person name="Kai C."/>
            <person name="Sasaki D."/>
            <person name="Tomaru Y."/>
            <person name="Fukuda S."/>
            <person name="Kanamori-Katayama M."/>
            <person name="Suzuki M."/>
            <person name="Aoki J."/>
            <person name="Arakawa T."/>
            <person name="Iida J."/>
            <person name="Imamura K."/>
            <person name="Itoh M."/>
            <person name="Kato T."/>
            <person name="Kawaji H."/>
            <person name="Kawagashira N."/>
            <person name="Kawashima T."/>
            <person name="Kojima M."/>
            <person name="Kondo S."/>
            <person name="Konno H."/>
            <person name="Nakano K."/>
            <person name="Ninomiya N."/>
            <person name="Nishio T."/>
            <person name="Okada M."/>
            <person name="Plessy C."/>
            <person name="Shibata K."/>
            <person name="Shiraki T."/>
            <person name="Suzuki S."/>
            <person name="Tagami M."/>
            <person name="Waki K."/>
            <person name="Watahiki A."/>
            <person name="Okamura-Oho Y."/>
            <person name="Suzuki H."/>
            <person name="Kawai J."/>
            <person name="Hayashizaki Y."/>
        </authorList>
    </citation>
    <scope>NUCLEOTIDE SEQUENCE [LARGE SCALE MRNA]</scope>
    <source>
        <strain>C57BL/6J</strain>
        <tissue>Heart</tissue>
    </source>
</reference>
<reference key="2">
    <citation type="journal article" date="2004" name="Genome Res.">
        <title>The status, quality, and expansion of the NIH full-length cDNA project: the Mammalian Gene Collection (MGC).</title>
        <authorList>
            <consortium name="The MGC Project Team"/>
        </authorList>
    </citation>
    <scope>NUCLEOTIDE SEQUENCE [LARGE SCALE MRNA]</scope>
    <source>
        <tissue>Testis</tissue>
    </source>
</reference>
<protein>
    <recommendedName>
        <fullName>Protein CIMAP1C</fullName>
    </recommendedName>
    <alternativeName>
        <fullName>Outer dense fiber protein 3-like protein 1</fullName>
    </alternativeName>
</protein>
<dbReference type="EMBL" id="AK142219">
    <property type="protein sequence ID" value="BAE24982.1"/>
    <property type="molecule type" value="mRNA"/>
</dbReference>
<dbReference type="EMBL" id="BC049697">
    <property type="protein sequence ID" value="AAH49697.1"/>
    <property type="molecule type" value="mRNA"/>
</dbReference>
<dbReference type="CCDS" id="CCDS23210.1"/>
<dbReference type="RefSeq" id="NP_941075.1">
    <property type="nucleotide sequence ID" value="NM_198673.2"/>
</dbReference>
<dbReference type="RefSeq" id="XP_006511313.1">
    <property type="nucleotide sequence ID" value="XM_006511250.3"/>
</dbReference>
<dbReference type="RefSeq" id="XP_006511314.1">
    <property type="nucleotide sequence ID" value="XM_006511251.3"/>
</dbReference>
<dbReference type="FunCoup" id="Q810P2">
    <property type="interactions" value="26"/>
</dbReference>
<dbReference type="STRING" id="10090.ENSMUSP00000060418"/>
<dbReference type="PhosphoSitePlus" id="Q810P2"/>
<dbReference type="PaxDb" id="10090-ENSMUSP00000060418"/>
<dbReference type="ProteomicsDB" id="293917"/>
<dbReference type="Antibodypedia" id="27373">
    <property type="antibodies" value="50 antibodies from 14 providers"/>
</dbReference>
<dbReference type="DNASU" id="382075"/>
<dbReference type="Ensembl" id="ENSMUST00000055036.7">
    <property type="protein sequence ID" value="ENSMUSP00000060418.7"/>
    <property type="gene ID" value="ENSMUSG00000045620.8"/>
</dbReference>
<dbReference type="GeneID" id="382075"/>
<dbReference type="KEGG" id="mmu:382075"/>
<dbReference type="UCSC" id="uc009ptj.1">
    <property type="organism name" value="mouse"/>
</dbReference>
<dbReference type="AGR" id="MGI:2681875"/>
<dbReference type="CTD" id="161753"/>
<dbReference type="MGI" id="MGI:2681875">
    <property type="gene designation" value="Odf3l1"/>
</dbReference>
<dbReference type="VEuPathDB" id="HostDB:ENSMUSG00000045620"/>
<dbReference type="eggNOG" id="ENOG502S2VQ">
    <property type="taxonomic scope" value="Eukaryota"/>
</dbReference>
<dbReference type="GeneTree" id="ENSGT00940000162054"/>
<dbReference type="HOGENOM" id="CLU_088282_1_1_1"/>
<dbReference type="InParanoid" id="Q810P2"/>
<dbReference type="OMA" id="YTLHTRH"/>
<dbReference type="OrthoDB" id="429991at2759"/>
<dbReference type="PhylomeDB" id="Q810P2"/>
<dbReference type="TreeFam" id="TF325804"/>
<dbReference type="BioGRID-ORCS" id="382075">
    <property type="hits" value="3 hits in 78 CRISPR screens"/>
</dbReference>
<dbReference type="PRO" id="PR:Q810P2"/>
<dbReference type="Proteomes" id="UP000000589">
    <property type="component" value="Chromosome 9"/>
</dbReference>
<dbReference type="RNAct" id="Q810P2">
    <property type="molecule type" value="protein"/>
</dbReference>
<dbReference type="Bgee" id="ENSMUSG00000045620">
    <property type="expression patterns" value="Expressed in testis and 23 other cell types or tissues"/>
</dbReference>
<dbReference type="ExpressionAtlas" id="Q810P2">
    <property type="expression patterns" value="baseline and differential"/>
</dbReference>
<dbReference type="InterPro" id="IPR051291">
    <property type="entry name" value="CIMAP"/>
</dbReference>
<dbReference type="InterPro" id="IPR010736">
    <property type="entry name" value="SHIPPO-rpt"/>
</dbReference>
<dbReference type="PANTHER" id="PTHR21580:SF3">
    <property type="entry name" value="OUTER DENSE FIBER PROTEIN 3-LIKE PROTEIN 1"/>
    <property type="match status" value="1"/>
</dbReference>
<dbReference type="PANTHER" id="PTHR21580">
    <property type="entry name" value="SHIPPO-1-RELATED"/>
    <property type="match status" value="1"/>
</dbReference>
<dbReference type="Pfam" id="PF07004">
    <property type="entry name" value="SHIPPO-rpt"/>
    <property type="match status" value="2"/>
</dbReference>
<sequence>MKQSKGSRNYVFYAQHPEKEEEVPSWHEIKQTPVIMATIKGPGPAKYLRSSCTGYIAHDISMFQEPAYSLHTRHTKKRIIDINSPGPCYFLNPKVTRFGISTCPQVPMEERISNPRINCMPASCKYNLEKTRPSGERQPPQYTFGYRCPYRVMDPNPAPNQYQLPVTLGTNIPVFRAAPSYSLASTNKNWFHKENIAGGPGPAMHTRPEPSVYQNRSPLFSMAKRFGCPLDHTHRPGPGSHDIQPVTVHKPRIPAFTMGIKHSPHLCPLIVDICD</sequence>
<evidence type="ECO:0000305" key="1"/>
<feature type="chain" id="PRO_0000304786" description="Protein CIMAP1C">
    <location>
        <begin position="1"/>
        <end position="275"/>
    </location>
</feature>
<feature type="repeat" description="STPGR 1">
    <location>
        <begin position="200"/>
        <end position="225"/>
    </location>
</feature>
<feature type="repeat" description="STPGR 2">
    <location>
        <begin position="236"/>
        <end position="261"/>
    </location>
</feature>
<accession>Q810P2</accession>
<name>CMA1C_MOUSE</name>
<organism>
    <name type="scientific">Mus musculus</name>
    <name type="common">Mouse</name>
    <dbReference type="NCBI Taxonomy" id="10090"/>
    <lineage>
        <taxon>Eukaryota</taxon>
        <taxon>Metazoa</taxon>
        <taxon>Chordata</taxon>
        <taxon>Craniata</taxon>
        <taxon>Vertebrata</taxon>
        <taxon>Euteleostomi</taxon>
        <taxon>Mammalia</taxon>
        <taxon>Eutheria</taxon>
        <taxon>Euarchontoglires</taxon>
        <taxon>Glires</taxon>
        <taxon>Rodentia</taxon>
        <taxon>Myomorpha</taxon>
        <taxon>Muroidea</taxon>
        <taxon>Muridae</taxon>
        <taxon>Murinae</taxon>
        <taxon>Mus</taxon>
        <taxon>Mus</taxon>
    </lineage>
</organism>
<gene>
    <name type="primary">CIMAP1C</name>
    <name type="synonym">Odf3l1</name>
</gene>
<keyword id="KW-1185">Reference proteome</keyword>
<keyword id="KW-0677">Repeat</keyword>